<proteinExistence type="inferred from homology"/>
<feature type="chain" id="PRO_1000190075" description="GTP cyclohydrolase 1">
    <location>
        <begin position="1"/>
        <end position="222"/>
    </location>
</feature>
<feature type="binding site" evidence="1">
    <location>
        <position position="111"/>
    </location>
    <ligand>
        <name>Zn(2+)</name>
        <dbReference type="ChEBI" id="CHEBI:29105"/>
    </ligand>
</feature>
<feature type="binding site" evidence="1">
    <location>
        <position position="114"/>
    </location>
    <ligand>
        <name>Zn(2+)</name>
        <dbReference type="ChEBI" id="CHEBI:29105"/>
    </ligand>
</feature>
<feature type="binding site" evidence="1">
    <location>
        <position position="182"/>
    </location>
    <ligand>
        <name>Zn(2+)</name>
        <dbReference type="ChEBI" id="CHEBI:29105"/>
    </ligand>
</feature>
<name>GCH1_ECO7I</name>
<comment type="catalytic activity">
    <reaction evidence="1">
        <text>GTP + H2O = 7,8-dihydroneopterin 3'-triphosphate + formate + H(+)</text>
        <dbReference type="Rhea" id="RHEA:17473"/>
        <dbReference type="ChEBI" id="CHEBI:15377"/>
        <dbReference type="ChEBI" id="CHEBI:15378"/>
        <dbReference type="ChEBI" id="CHEBI:15740"/>
        <dbReference type="ChEBI" id="CHEBI:37565"/>
        <dbReference type="ChEBI" id="CHEBI:58462"/>
        <dbReference type="EC" id="3.5.4.16"/>
    </reaction>
</comment>
<comment type="pathway">
    <text evidence="1">Cofactor biosynthesis; 7,8-dihydroneopterin triphosphate biosynthesis; 7,8-dihydroneopterin triphosphate from GTP: step 1/1.</text>
</comment>
<comment type="subunit">
    <text evidence="1">Homomer.</text>
</comment>
<comment type="similarity">
    <text evidence="1">Belongs to the GTP cyclohydrolase I family.</text>
</comment>
<organism>
    <name type="scientific">Escherichia coli O7:K1 (strain IAI39 / ExPEC)</name>
    <dbReference type="NCBI Taxonomy" id="585057"/>
    <lineage>
        <taxon>Bacteria</taxon>
        <taxon>Pseudomonadati</taxon>
        <taxon>Pseudomonadota</taxon>
        <taxon>Gammaproteobacteria</taxon>
        <taxon>Enterobacterales</taxon>
        <taxon>Enterobacteriaceae</taxon>
        <taxon>Escherichia</taxon>
    </lineage>
</organism>
<evidence type="ECO:0000255" key="1">
    <source>
        <dbReference type="HAMAP-Rule" id="MF_00223"/>
    </source>
</evidence>
<reference key="1">
    <citation type="journal article" date="2009" name="PLoS Genet.">
        <title>Organised genome dynamics in the Escherichia coli species results in highly diverse adaptive paths.</title>
        <authorList>
            <person name="Touchon M."/>
            <person name="Hoede C."/>
            <person name="Tenaillon O."/>
            <person name="Barbe V."/>
            <person name="Baeriswyl S."/>
            <person name="Bidet P."/>
            <person name="Bingen E."/>
            <person name="Bonacorsi S."/>
            <person name="Bouchier C."/>
            <person name="Bouvet O."/>
            <person name="Calteau A."/>
            <person name="Chiapello H."/>
            <person name="Clermont O."/>
            <person name="Cruveiller S."/>
            <person name="Danchin A."/>
            <person name="Diard M."/>
            <person name="Dossat C."/>
            <person name="Karoui M.E."/>
            <person name="Frapy E."/>
            <person name="Garry L."/>
            <person name="Ghigo J.M."/>
            <person name="Gilles A.M."/>
            <person name="Johnson J."/>
            <person name="Le Bouguenec C."/>
            <person name="Lescat M."/>
            <person name="Mangenot S."/>
            <person name="Martinez-Jehanne V."/>
            <person name="Matic I."/>
            <person name="Nassif X."/>
            <person name="Oztas S."/>
            <person name="Petit M.A."/>
            <person name="Pichon C."/>
            <person name="Rouy Z."/>
            <person name="Ruf C.S."/>
            <person name="Schneider D."/>
            <person name="Tourret J."/>
            <person name="Vacherie B."/>
            <person name="Vallenet D."/>
            <person name="Medigue C."/>
            <person name="Rocha E.P.C."/>
            <person name="Denamur E."/>
        </authorList>
    </citation>
    <scope>NUCLEOTIDE SEQUENCE [LARGE SCALE GENOMIC DNA]</scope>
    <source>
        <strain>IAI39 / ExPEC</strain>
    </source>
</reference>
<sequence length="222" mass="24831">MPSLSKEAALVHEALVARGLETPLRPPVHEMDNETRKSLIAGHMTEIMQLLNLDLADDSLMETPHRIAKMYVDEIFSGLDYANFPKITLIENKMKVDEMVTVRDITLTSTCEHHFVTIDGKATVAYIPKDSVIGLSKINRIVQFFAQRPQVQERLTQQILIALQTLLGTNNVAVSIDAVHYCVKARGIRDATSATTTTSLGGLFKSSQNTRHEFLRAVRHHN</sequence>
<dbReference type="EC" id="3.5.4.16" evidence="1"/>
<dbReference type="EMBL" id="CU928164">
    <property type="protein sequence ID" value="CAR18418.1"/>
    <property type="molecule type" value="Genomic_DNA"/>
</dbReference>
<dbReference type="RefSeq" id="WP_001139613.1">
    <property type="nucleotide sequence ID" value="NC_011750.1"/>
</dbReference>
<dbReference type="RefSeq" id="YP_002408254.1">
    <property type="nucleotide sequence ID" value="NC_011750.1"/>
</dbReference>
<dbReference type="SMR" id="B7NMB8"/>
<dbReference type="STRING" id="585057.ECIAI39_2292"/>
<dbReference type="GeneID" id="93775029"/>
<dbReference type="KEGG" id="ect:ECIAI39_2292"/>
<dbReference type="PATRIC" id="fig|585057.6.peg.2386"/>
<dbReference type="HOGENOM" id="CLU_049768_3_2_6"/>
<dbReference type="UniPathway" id="UPA00848">
    <property type="reaction ID" value="UER00151"/>
</dbReference>
<dbReference type="Proteomes" id="UP000000749">
    <property type="component" value="Chromosome"/>
</dbReference>
<dbReference type="GO" id="GO:0005737">
    <property type="term" value="C:cytoplasm"/>
    <property type="evidence" value="ECO:0007669"/>
    <property type="project" value="TreeGrafter"/>
</dbReference>
<dbReference type="GO" id="GO:0005525">
    <property type="term" value="F:GTP binding"/>
    <property type="evidence" value="ECO:0007669"/>
    <property type="project" value="TreeGrafter"/>
</dbReference>
<dbReference type="GO" id="GO:0003934">
    <property type="term" value="F:GTP cyclohydrolase I activity"/>
    <property type="evidence" value="ECO:0007669"/>
    <property type="project" value="UniProtKB-UniRule"/>
</dbReference>
<dbReference type="GO" id="GO:0008270">
    <property type="term" value="F:zinc ion binding"/>
    <property type="evidence" value="ECO:0007669"/>
    <property type="project" value="UniProtKB-UniRule"/>
</dbReference>
<dbReference type="GO" id="GO:0006730">
    <property type="term" value="P:one-carbon metabolic process"/>
    <property type="evidence" value="ECO:0007669"/>
    <property type="project" value="UniProtKB-UniRule"/>
</dbReference>
<dbReference type="GO" id="GO:0006729">
    <property type="term" value="P:tetrahydrobiopterin biosynthetic process"/>
    <property type="evidence" value="ECO:0007669"/>
    <property type="project" value="TreeGrafter"/>
</dbReference>
<dbReference type="GO" id="GO:0046654">
    <property type="term" value="P:tetrahydrofolate biosynthetic process"/>
    <property type="evidence" value="ECO:0007669"/>
    <property type="project" value="UniProtKB-UniRule"/>
</dbReference>
<dbReference type="CDD" id="cd00642">
    <property type="entry name" value="GTP_cyclohydro1"/>
    <property type="match status" value="1"/>
</dbReference>
<dbReference type="FunFam" id="1.10.286.10:FF:000002">
    <property type="entry name" value="GTP cyclohydrolase 1"/>
    <property type="match status" value="1"/>
</dbReference>
<dbReference type="FunFam" id="3.30.1130.10:FF:000001">
    <property type="entry name" value="GTP cyclohydrolase 1"/>
    <property type="match status" value="1"/>
</dbReference>
<dbReference type="Gene3D" id="1.10.286.10">
    <property type="match status" value="1"/>
</dbReference>
<dbReference type="Gene3D" id="3.30.1130.10">
    <property type="match status" value="1"/>
</dbReference>
<dbReference type="HAMAP" id="MF_00223">
    <property type="entry name" value="FolE"/>
    <property type="match status" value="1"/>
</dbReference>
<dbReference type="InterPro" id="IPR043133">
    <property type="entry name" value="GTP-CH-I_C/QueF"/>
</dbReference>
<dbReference type="InterPro" id="IPR043134">
    <property type="entry name" value="GTP-CH-I_N"/>
</dbReference>
<dbReference type="InterPro" id="IPR001474">
    <property type="entry name" value="GTP_CycHdrlase_I"/>
</dbReference>
<dbReference type="InterPro" id="IPR018234">
    <property type="entry name" value="GTP_CycHdrlase_I_CS"/>
</dbReference>
<dbReference type="InterPro" id="IPR020602">
    <property type="entry name" value="GTP_CycHdrlase_I_dom"/>
</dbReference>
<dbReference type="NCBIfam" id="TIGR00063">
    <property type="entry name" value="folE"/>
    <property type="match status" value="1"/>
</dbReference>
<dbReference type="NCBIfam" id="NF006824">
    <property type="entry name" value="PRK09347.1-1"/>
    <property type="match status" value="1"/>
</dbReference>
<dbReference type="NCBIfam" id="NF006826">
    <property type="entry name" value="PRK09347.1-3"/>
    <property type="match status" value="1"/>
</dbReference>
<dbReference type="PANTHER" id="PTHR11109:SF7">
    <property type="entry name" value="GTP CYCLOHYDROLASE 1"/>
    <property type="match status" value="1"/>
</dbReference>
<dbReference type="PANTHER" id="PTHR11109">
    <property type="entry name" value="GTP CYCLOHYDROLASE I"/>
    <property type="match status" value="1"/>
</dbReference>
<dbReference type="Pfam" id="PF01227">
    <property type="entry name" value="GTP_cyclohydroI"/>
    <property type="match status" value="1"/>
</dbReference>
<dbReference type="SUPFAM" id="SSF55620">
    <property type="entry name" value="Tetrahydrobiopterin biosynthesis enzymes-like"/>
    <property type="match status" value="1"/>
</dbReference>
<dbReference type="PROSITE" id="PS00859">
    <property type="entry name" value="GTP_CYCLOHYDROL_1_1"/>
    <property type="match status" value="1"/>
</dbReference>
<dbReference type="PROSITE" id="PS00860">
    <property type="entry name" value="GTP_CYCLOHYDROL_1_2"/>
    <property type="match status" value="1"/>
</dbReference>
<gene>
    <name evidence="1" type="primary">folE</name>
    <name type="ordered locus">ECIAI39_2292</name>
</gene>
<accession>B7NMB8</accession>
<protein>
    <recommendedName>
        <fullName evidence="1">GTP cyclohydrolase 1</fullName>
        <ecNumber evidence="1">3.5.4.16</ecNumber>
    </recommendedName>
    <alternativeName>
        <fullName evidence="1">GTP cyclohydrolase I</fullName>
        <shortName evidence="1">GTP-CH-I</shortName>
    </alternativeName>
</protein>
<keyword id="KW-0378">Hydrolase</keyword>
<keyword id="KW-0479">Metal-binding</keyword>
<keyword id="KW-0554">One-carbon metabolism</keyword>
<keyword id="KW-0862">Zinc</keyword>